<protein>
    <recommendedName>
        <fullName evidence="1">Exodeoxyribonuclease 7 small subunit</fullName>
        <ecNumber evidence="1">3.1.11.6</ecNumber>
    </recommendedName>
    <alternativeName>
        <fullName evidence="1">Exodeoxyribonuclease VII small subunit</fullName>
        <shortName evidence="1">Exonuclease VII small subunit</shortName>
    </alternativeName>
</protein>
<organism>
    <name type="scientific">Actinobacillus succinogenes (strain ATCC 55618 / DSM 22257 / CCUG 43843 / 130Z)</name>
    <dbReference type="NCBI Taxonomy" id="339671"/>
    <lineage>
        <taxon>Bacteria</taxon>
        <taxon>Pseudomonadati</taxon>
        <taxon>Pseudomonadota</taxon>
        <taxon>Gammaproteobacteria</taxon>
        <taxon>Pasteurellales</taxon>
        <taxon>Pasteurellaceae</taxon>
        <taxon>Actinobacillus</taxon>
    </lineage>
</organism>
<reference key="1">
    <citation type="journal article" date="2010" name="BMC Genomics">
        <title>A genomic perspective on the potential of Actinobacillus succinogenes for industrial succinate production.</title>
        <authorList>
            <person name="McKinlay J.B."/>
            <person name="Laivenieks M."/>
            <person name="Schindler B.D."/>
            <person name="McKinlay A.A."/>
            <person name="Siddaramappa S."/>
            <person name="Challacombe J.F."/>
            <person name="Lowry S.R."/>
            <person name="Clum A."/>
            <person name="Lapidus A.L."/>
            <person name="Burkhart K.B."/>
            <person name="Harkins V."/>
            <person name="Vieille C."/>
        </authorList>
    </citation>
    <scope>NUCLEOTIDE SEQUENCE [LARGE SCALE GENOMIC DNA]</scope>
    <source>
        <strain>ATCC 55618 / DSM 22257 / CCUG 43843 / 130Z</strain>
    </source>
</reference>
<sequence length="78" mass="8773">MARKPVELDFESTLAQLEAVVTELERGDLPLESALKEFETGIKLAKQGQERLQQAEQRIQILLQKSDTAPLTDYSADE</sequence>
<evidence type="ECO:0000255" key="1">
    <source>
        <dbReference type="HAMAP-Rule" id="MF_00337"/>
    </source>
</evidence>
<gene>
    <name evidence="1" type="primary">xseB</name>
    <name type="ordered locus">Asuc_1374</name>
</gene>
<name>EX7S_ACTSZ</name>
<feature type="chain" id="PRO_1000072047" description="Exodeoxyribonuclease 7 small subunit">
    <location>
        <begin position="1"/>
        <end position="78"/>
    </location>
</feature>
<keyword id="KW-0963">Cytoplasm</keyword>
<keyword id="KW-0269">Exonuclease</keyword>
<keyword id="KW-0378">Hydrolase</keyword>
<keyword id="KW-0540">Nuclease</keyword>
<keyword id="KW-1185">Reference proteome</keyword>
<comment type="function">
    <text evidence="1">Bidirectionally degrades single-stranded DNA into large acid-insoluble oligonucleotides, which are then degraded further into small acid-soluble oligonucleotides.</text>
</comment>
<comment type="catalytic activity">
    <reaction evidence="1">
        <text>Exonucleolytic cleavage in either 5'- to 3'- or 3'- to 5'-direction to yield nucleoside 5'-phosphates.</text>
        <dbReference type="EC" id="3.1.11.6"/>
    </reaction>
</comment>
<comment type="subunit">
    <text evidence="1">Heterooligomer composed of large and small subunits.</text>
</comment>
<comment type="subcellular location">
    <subcellularLocation>
        <location evidence="1">Cytoplasm</location>
    </subcellularLocation>
</comment>
<comment type="similarity">
    <text evidence="1">Belongs to the XseB family.</text>
</comment>
<proteinExistence type="inferred from homology"/>
<accession>A6VP37</accession>
<dbReference type="EC" id="3.1.11.6" evidence="1"/>
<dbReference type="EMBL" id="CP000746">
    <property type="protein sequence ID" value="ABR74734.1"/>
    <property type="molecule type" value="Genomic_DNA"/>
</dbReference>
<dbReference type="RefSeq" id="WP_012073111.1">
    <property type="nucleotide sequence ID" value="NC_009655.1"/>
</dbReference>
<dbReference type="SMR" id="A6VP37"/>
<dbReference type="STRING" id="339671.Asuc_1374"/>
<dbReference type="KEGG" id="asu:Asuc_1374"/>
<dbReference type="eggNOG" id="COG1722">
    <property type="taxonomic scope" value="Bacteria"/>
</dbReference>
<dbReference type="HOGENOM" id="CLU_145918_3_3_6"/>
<dbReference type="OrthoDB" id="5591562at2"/>
<dbReference type="Proteomes" id="UP000001114">
    <property type="component" value="Chromosome"/>
</dbReference>
<dbReference type="GO" id="GO:0005829">
    <property type="term" value="C:cytosol"/>
    <property type="evidence" value="ECO:0007669"/>
    <property type="project" value="TreeGrafter"/>
</dbReference>
<dbReference type="GO" id="GO:0009318">
    <property type="term" value="C:exodeoxyribonuclease VII complex"/>
    <property type="evidence" value="ECO:0007669"/>
    <property type="project" value="InterPro"/>
</dbReference>
<dbReference type="GO" id="GO:0008855">
    <property type="term" value="F:exodeoxyribonuclease VII activity"/>
    <property type="evidence" value="ECO:0007669"/>
    <property type="project" value="UniProtKB-UniRule"/>
</dbReference>
<dbReference type="GO" id="GO:0006308">
    <property type="term" value="P:DNA catabolic process"/>
    <property type="evidence" value="ECO:0007669"/>
    <property type="project" value="UniProtKB-UniRule"/>
</dbReference>
<dbReference type="Gene3D" id="1.10.287.1040">
    <property type="entry name" value="Exonuclease VII, small subunit"/>
    <property type="match status" value="1"/>
</dbReference>
<dbReference type="HAMAP" id="MF_00337">
    <property type="entry name" value="Exonuc_7_S"/>
    <property type="match status" value="1"/>
</dbReference>
<dbReference type="InterPro" id="IPR003761">
    <property type="entry name" value="Exonuc_VII_S"/>
</dbReference>
<dbReference type="InterPro" id="IPR037004">
    <property type="entry name" value="Exonuc_VII_ssu_sf"/>
</dbReference>
<dbReference type="NCBIfam" id="NF002137">
    <property type="entry name" value="PRK00977.1-1"/>
    <property type="match status" value="1"/>
</dbReference>
<dbReference type="NCBIfam" id="TIGR01280">
    <property type="entry name" value="xseB"/>
    <property type="match status" value="1"/>
</dbReference>
<dbReference type="PANTHER" id="PTHR34137">
    <property type="entry name" value="EXODEOXYRIBONUCLEASE 7 SMALL SUBUNIT"/>
    <property type="match status" value="1"/>
</dbReference>
<dbReference type="PANTHER" id="PTHR34137:SF1">
    <property type="entry name" value="EXODEOXYRIBONUCLEASE 7 SMALL SUBUNIT"/>
    <property type="match status" value="1"/>
</dbReference>
<dbReference type="Pfam" id="PF02609">
    <property type="entry name" value="Exonuc_VII_S"/>
    <property type="match status" value="1"/>
</dbReference>
<dbReference type="SUPFAM" id="SSF116842">
    <property type="entry name" value="XseB-like"/>
    <property type="match status" value="1"/>
</dbReference>